<dbReference type="EMBL" id="CP001403">
    <property type="protein sequence ID" value="ACP45432.1"/>
    <property type="molecule type" value="Genomic_DNA"/>
</dbReference>
<dbReference type="RefSeq" id="WP_012716095.1">
    <property type="nucleotide sequence ID" value="NC_012622.1"/>
</dbReference>
<dbReference type="SMR" id="C3NDP3"/>
<dbReference type="GeneID" id="15297545"/>
<dbReference type="KEGG" id="siy:YG5714_1165"/>
<dbReference type="HOGENOM" id="CLU_033458_0_2_2"/>
<dbReference type="Proteomes" id="UP000002308">
    <property type="component" value="Chromosome"/>
</dbReference>
<dbReference type="GO" id="GO:0043022">
    <property type="term" value="F:ribosome binding"/>
    <property type="evidence" value="ECO:0007669"/>
    <property type="project" value="TreeGrafter"/>
</dbReference>
<dbReference type="GO" id="GO:0003723">
    <property type="term" value="F:RNA binding"/>
    <property type="evidence" value="ECO:0007669"/>
    <property type="project" value="UniProtKB-UniRule"/>
</dbReference>
<dbReference type="GO" id="GO:0003743">
    <property type="term" value="F:translation initiation factor activity"/>
    <property type="evidence" value="ECO:0007669"/>
    <property type="project" value="UniProtKB-UniRule"/>
</dbReference>
<dbReference type="CDD" id="cd04452">
    <property type="entry name" value="S1_IF2_alpha"/>
    <property type="match status" value="1"/>
</dbReference>
<dbReference type="FunFam" id="2.40.50.140:FF:000015">
    <property type="entry name" value="Eukaryotic translation initiation factor 2 subunit alpha"/>
    <property type="match status" value="1"/>
</dbReference>
<dbReference type="Gene3D" id="3.30.70.1130">
    <property type="entry name" value="EIF_2_alpha"/>
    <property type="match status" value="1"/>
</dbReference>
<dbReference type="Gene3D" id="2.40.50.140">
    <property type="entry name" value="Nucleic acid-binding proteins"/>
    <property type="match status" value="1"/>
</dbReference>
<dbReference type="Gene3D" id="1.10.150.190">
    <property type="entry name" value="Translation initiation factor 2, subunit 1, domain 2"/>
    <property type="match status" value="1"/>
</dbReference>
<dbReference type="HAMAP" id="MF_00231">
    <property type="entry name" value="eIF_2_alpha"/>
    <property type="match status" value="1"/>
</dbReference>
<dbReference type="InterPro" id="IPR012340">
    <property type="entry name" value="NA-bd_OB-fold"/>
</dbReference>
<dbReference type="InterPro" id="IPR003029">
    <property type="entry name" value="S1_domain"/>
</dbReference>
<dbReference type="InterPro" id="IPR044126">
    <property type="entry name" value="S1_IF2_alpha"/>
</dbReference>
<dbReference type="InterPro" id="IPR022964">
    <property type="entry name" value="TIF2_asu_arc"/>
</dbReference>
<dbReference type="InterPro" id="IPR024055">
    <property type="entry name" value="TIF2_asu_C"/>
</dbReference>
<dbReference type="InterPro" id="IPR024054">
    <property type="entry name" value="TIF2_asu_middle_sf"/>
</dbReference>
<dbReference type="InterPro" id="IPR011488">
    <property type="entry name" value="TIF_2_asu"/>
</dbReference>
<dbReference type="NCBIfam" id="NF003062">
    <property type="entry name" value="PRK03987.1-1"/>
    <property type="match status" value="1"/>
</dbReference>
<dbReference type="PANTHER" id="PTHR10602">
    <property type="entry name" value="EUKARYOTIC TRANSLATION INITIATION FACTOR 2 SUBUNIT 1"/>
    <property type="match status" value="1"/>
</dbReference>
<dbReference type="PANTHER" id="PTHR10602:SF0">
    <property type="entry name" value="EUKARYOTIC TRANSLATION INITIATION FACTOR 2 SUBUNIT 1"/>
    <property type="match status" value="1"/>
</dbReference>
<dbReference type="Pfam" id="PF07541">
    <property type="entry name" value="EIF_2_alpha"/>
    <property type="match status" value="1"/>
</dbReference>
<dbReference type="Pfam" id="PF00575">
    <property type="entry name" value="S1"/>
    <property type="match status" value="1"/>
</dbReference>
<dbReference type="SMART" id="SM00316">
    <property type="entry name" value="S1"/>
    <property type="match status" value="1"/>
</dbReference>
<dbReference type="SUPFAM" id="SSF110993">
    <property type="entry name" value="eIF-2-alpha, C-terminal domain"/>
    <property type="match status" value="1"/>
</dbReference>
<dbReference type="SUPFAM" id="SSF116742">
    <property type="entry name" value="eIF2alpha middle domain-like"/>
    <property type="match status" value="1"/>
</dbReference>
<dbReference type="SUPFAM" id="SSF50249">
    <property type="entry name" value="Nucleic acid-binding proteins"/>
    <property type="match status" value="1"/>
</dbReference>
<dbReference type="PROSITE" id="PS50126">
    <property type="entry name" value="S1"/>
    <property type="match status" value="1"/>
</dbReference>
<sequence>MIYSRSRLPSEGEILIATVKQVFDYGSYVTLDEYGGLQAFLPWSEVSSKWVKNIRDVLKENRKVVVKVIRVDRRKGTVDVSLKKVTDDERRKKNLQWKKIQRLDKILELVSQQLKLSEKDAWEQVAWKLEAKYGDPISAIERAVKEGEKILIDAGVPEIWIKPLLEEAAKHTEEKKVKMSGLITVKTSEPLGVQKIKEVMSKALENIEQDYESILNVKIYTIGAPRYRVDVVGTNPKDASEALNQIISNLIKIGKEENVDISVVKK</sequence>
<feature type="chain" id="PRO_1000204375" description="Translation initiation factor 2 subunit alpha">
    <location>
        <begin position="1"/>
        <end position="266"/>
    </location>
</feature>
<feature type="domain" description="S1 motif" evidence="1">
    <location>
        <begin position="12"/>
        <end position="83"/>
    </location>
</feature>
<name>IF2A_SACI7</name>
<gene>
    <name evidence="1" type="primary">eif2a</name>
    <name type="ordered locus">YG5714_1165</name>
</gene>
<keyword id="KW-0396">Initiation factor</keyword>
<keyword id="KW-0648">Protein biosynthesis</keyword>
<keyword id="KW-0694">RNA-binding</keyword>
<accession>C3NDP3</accession>
<comment type="function">
    <text evidence="1">eIF-2 functions in the early steps of protein synthesis by forming a ternary complex with GTP and initiator tRNA.</text>
</comment>
<comment type="subunit">
    <text evidence="1">Heterotrimer composed of an alpha, a beta and a gamma chain.</text>
</comment>
<comment type="similarity">
    <text evidence="1">Belongs to the eIF-2-alpha family.</text>
</comment>
<organism>
    <name type="scientific">Saccharolobus islandicus (strain Y.G.57.14 / Yellowstone #1)</name>
    <name type="common">Sulfolobus islandicus</name>
    <dbReference type="NCBI Taxonomy" id="439386"/>
    <lineage>
        <taxon>Archaea</taxon>
        <taxon>Thermoproteota</taxon>
        <taxon>Thermoprotei</taxon>
        <taxon>Sulfolobales</taxon>
        <taxon>Sulfolobaceae</taxon>
        <taxon>Saccharolobus</taxon>
    </lineage>
</organism>
<protein>
    <recommendedName>
        <fullName evidence="1">Translation initiation factor 2 subunit alpha</fullName>
    </recommendedName>
    <alternativeName>
        <fullName evidence="1">aIF2-alpha</fullName>
    </alternativeName>
    <alternativeName>
        <fullName evidence="1">eIF-2-alpha</fullName>
    </alternativeName>
</protein>
<proteinExistence type="inferred from homology"/>
<reference key="1">
    <citation type="journal article" date="2009" name="Proc. Natl. Acad. Sci. U.S.A.">
        <title>Biogeography of the Sulfolobus islandicus pan-genome.</title>
        <authorList>
            <person name="Reno M.L."/>
            <person name="Held N.L."/>
            <person name="Fields C.J."/>
            <person name="Burke P.V."/>
            <person name="Whitaker R.J."/>
        </authorList>
    </citation>
    <scope>NUCLEOTIDE SEQUENCE [LARGE SCALE GENOMIC DNA]</scope>
    <source>
        <strain>Y.G.57.14 / Yellowstone #1</strain>
    </source>
</reference>
<evidence type="ECO:0000255" key="1">
    <source>
        <dbReference type="HAMAP-Rule" id="MF_00231"/>
    </source>
</evidence>